<sequence>MAAQVTDALKNLKVKDPNSVIESAAEAKSNGNTQAEAEDSDDEEEEPVNGEGAGEGGAKKKRKRKKKPKKKAGANPKVQSSPPRVLLSNLFPSGEYPVGEEVEYRDENNYRTTSEEKRYLDRMNNDFLQEYRQAAEIHRQVRQYAKANIKPGQTLTEIAEGIEDSVRALTGHPGLEEGDNIKGGVAFPTGVNLDHIAAHYSPNAGNKTVLAYENVMKVDFGVHVNGRIVDSAFTIAFDPMYDNLLEAVKQATNTGIKEAGIDARLGEIGEHIQETMESYEVEIKGQTYQVKPIRNLNGHDILQWKIHGGKSVPIVKSNDQTKMEEGEVFAIETFGSTGNGYVRDDLECSHYAKVADAPNVPLRIASAGKLLNVINKNFGTLPFCRRYLDRLGQDKYLLGLNALVSHGIVQDYPPLVDKKGSYTAQFEHTIVLRPNCKEVISRGDDY</sequence>
<evidence type="ECO:0000255" key="1">
    <source>
        <dbReference type="HAMAP-Rule" id="MF_03175"/>
    </source>
</evidence>
<evidence type="ECO:0000256" key="2">
    <source>
        <dbReference type="SAM" id="MobiDB-lite"/>
    </source>
</evidence>
<accession>A7EZ86</accession>
<protein>
    <recommendedName>
        <fullName evidence="1">Methionine aminopeptidase 2</fullName>
        <shortName evidence="1">MAP 2</shortName>
        <shortName evidence="1">MetAP 2</shortName>
        <ecNumber evidence="1">3.4.11.18</ecNumber>
    </recommendedName>
    <alternativeName>
        <fullName evidence="1">Peptidase M</fullName>
    </alternativeName>
</protein>
<keyword id="KW-0031">Aminopeptidase</keyword>
<keyword id="KW-0963">Cytoplasm</keyword>
<keyword id="KW-0378">Hydrolase</keyword>
<keyword id="KW-0479">Metal-binding</keyword>
<keyword id="KW-0645">Protease</keyword>
<keyword id="KW-1185">Reference proteome</keyword>
<proteinExistence type="inferred from homology"/>
<feature type="chain" id="PRO_0000407668" description="Methionine aminopeptidase 2">
    <location>
        <begin position="1"/>
        <end position="446"/>
    </location>
</feature>
<feature type="region of interest" description="Disordered" evidence="2">
    <location>
        <begin position="1"/>
        <end position="91"/>
    </location>
</feature>
<feature type="compositionally biased region" description="Acidic residues" evidence="2">
    <location>
        <begin position="36"/>
        <end position="48"/>
    </location>
</feature>
<feature type="compositionally biased region" description="Basic residues" evidence="2">
    <location>
        <begin position="59"/>
        <end position="72"/>
    </location>
</feature>
<feature type="binding site" evidence="1">
    <location>
        <position position="199"/>
    </location>
    <ligand>
        <name>substrate</name>
    </ligand>
</feature>
<feature type="binding site" evidence="1">
    <location>
        <position position="219"/>
    </location>
    <ligand>
        <name>a divalent metal cation</name>
        <dbReference type="ChEBI" id="CHEBI:60240"/>
        <label>1</label>
    </ligand>
</feature>
<feature type="binding site" evidence="1">
    <location>
        <position position="230"/>
    </location>
    <ligand>
        <name>a divalent metal cation</name>
        <dbReference type="ChEBI" id="CHEBI:60240"/>
        <label>1</label>
    </ligand>
</feature>
<feature type="binding site" evidence="1">
    <location>
        <position position="230"/>
    </location>
    <ligand>
        <name>a divalent metal cation</name>
        <dbReference type="ChEBI" id="CHEBI:60240"/>
        <label>2</label>
        <note>catalytic</note>
    </ligand>
</feature>
<feature type="binding site" evidence="1">
    <location>
        <position position="299"/>
    </location>
    <ligand>
        <name>a divalent metal cation</name>
        <dbReference type="ChEBI" id="CHEBI:60240"/>
        <label>2</label>
        <note>catalytic</note>
    </ligand>
</feature>
<feature type="binding site" evidence="1">
    <location>
        <position position="307"/>
    </location>
    <ligand>
        <name>substrate</name>
    </ligand>
</feature>
<feature type="binding site" evidence="1">
    <location>
        <position position="332"/>
    </location>
    <ligand>
        <name>a divalent metal cation</name>
        <dbReference type="ChEBI" id="CHEBI:60240"/>
        <label>2</label>
        <note>catalytic</note>
    </ligand>
</feature>
<feature type="binding site" evidence="1">
    <location>
        <position position="427"/>
    </location>
    <ligand>
        <name>a divalent metal cation</name>
        <dbReference type="ChEBI" id="CHEBI:60240"/>
        <label>1</label>
    </ligand>
</feature>
<feature type="binding site" evidence="1">
    <location>
        <position position="427"/>
    </location>
    <ligand>
        <name>a divalent metal cation</name>
        <dbReference type="ChEBI" id="CHEBI:60240"/>
        <label>2</label>
        <note>catalytic</note>
    </ligand>
</feature>
<comment type="function">
    <text evidence="1">Cotranslationally removes the N-terminal methionine from nascent proteins. The N-terminal methionine is often cleaved when the second residue in the primary sequence is small and uncharged (Met-Ala-, Cys, Gly, Pro, Ser, Thr, or Val).</text>
</comment>
<comment type="catalytic activity">
    <reaction evidence="1">
        <text>Release of N-terminal amino acids, preferentially methionine, from peptides and arylamides.</text>
        <dbReference type="EC" id="3.4.11.18"/>
    </reaction>
</comment>
<comment type="cofactor">
    <cofactor evidence="1">
        <name>Co(2+)</name>
        <dbReference type="ChEBI" id="CHEBI:48828"/>
    </cofactor>
    <cofactor evidence="1">
        <name>Zn(2+)</name>
        <dbReference type="ChEBI" id="CHEBI:29105"/>
    </cofactor>
    <cofactor evidence="1">
        <name>Mn(2+)</name>
        <dbReference type="ChEBI" id="CHEBI:29035"/>
    </cofactor>
    <cofactor evidence="1">
        <name>Fe(2+)</name>
        <dbReference type="ChEBI" id="CHEBI:29033"/>
    </cofactor>
    <text evidence="1">Binds 2 divalent metal cations per subunit. Has a high-affinity and a low affinity metal-binding site. The true nature of the physiological cofactor is under debate. The enzyme is active with cobalt, zinc, manganese or divalent iron ions. Most likely, methionine aminopeptidases function as mononuclear Fe(2+)-metalloproteases under physiological conditions, and the catalytically relevant metal-binding site has been assigned to the histidine-containing high-affinity site.</text>
</comment>
<comment type="subcellular location">
    <subcellularLocation>
        <location evidence="1">Cytoplasm</location>
    </subcellularLocation>
</comment>
<comment type="similarity">
    <text evidence="1">Belongs to the peptidase M24A family. Methionine aminopeptidase eukaryotic type 2 subfamily.</text>
</comment>
<name>MAP2_SCLS1</name>
<organism>
    <name type="scientific">Sclerotinia sclerotiorum (strain ATCC 18683 / 1980 / Ss-1)</name>
    <name type="common">White mold</name>
    <name type="synonym">Whetzelinia sclerotiorum</name>
    <dbReference type="NCBI Taxonomy" id="665079"/>
    <lineage>
        <taxon>Eukaryota</taxon>
        <taxon>Fungi</taxon>
        <taxon>Dikarya</taxon>
        <taxon>Ascomycota</taxon>
        <taxon>Pezizomycotina</taxon>
        <taxon>Leotiomycetes</taxon>
        <taxon>Helotiales</taxon>
        <taxon>Sclerotiniaceae</taxon>
        <taxon>Sclerotinia</taxon>
    </lineage>
</organism>
<gene>
    <name type="ORF">SS1G_10653</name>
</gene>
<reference key="1">
    <citation type="journal article" date="2011" name="PLoS Genet.">
        <title>Genomic analysis of the necrotrophic fungal pathogens Sclerotinia sclerotiorum and Botrytis cinerea.</title>
        <authorList>
            <person name="Amselem J."/>
            <person name="Cuomo C.A."/>
            <person name="van Kan J.A.L."/>
            <person name="Viaud M."/>
            <person name="Benito E.P."/>
            <person name="Couloux A."/>
            <person name="Coutinho P.M."/>
            <person name="de Vries R.P."/>
            <person name="Dyer P.S."/>
            <person name="Fillinger S."/>
            <person name="Fournier E."/>
            <person name="Gout L."/>
            <person name="Hahn M."/>
            <person name="Kohn L."/>
            <person name="Lapalu N."/>
            <person name="Plummer K.M."/>
            <person name="Pradier J.-M."/>
            <person name="Quevillon E."/>
            <person name="Sharon A."/>
            <person name="Simon A."/>
            <person name="ten Have A."/>
            <person name="Tudzynski B."/>
            <person name="Tudzynski P."/>
            <person name="Wincker P."/>
            <person name="Andrew M."/>
            <person name="Anthouard V."/>
            <person name="Beever R.E."/>
            <person name="Beffa R."/>
            <person name="Benoit I."/>
            <person name="Bouzid O."/>
            <person name="Brault B."/>
            <person name="Chen Z."/>
            <person name="Choquer M."/>
            <person name="Collemare J."/>
            <person name="Cotton P."/>
            <person name="Danchin E.G."/>
            <person name="Da Silva C."/>
            <person name="Gautier A."/>
            <person name="Giraud C."/>
            <person name="Giraud T."/>
            <person name="Gonzalez C."/>
            <person name="Grossetete S."/>
            <person name="Gueldener U."/>
            <person name="Henrissat B."/>
            <person name="Howlett B.J."/>
            <person name="Kodira C."/>
            <person name="Kretschmer M."/>
            <person name="Lappartient A."/>
            <person name="Leroch M."/>
            <person name="Levis C."/>
            <person name="Mauceli E."/>
            <person name="Neuveglise C."/>
            <person name="Oeser B."/>
            <person name="Pearson M."/>
            <person name="Poulain J."/>
            <person name="Poussereau N."/>
            <person name="Quesneville H."/>
            <person name="Rascle C."/>
            <person name="Schumacher J."/>
            <person name="Segurens B."/>
            <person name="Sexton A."/>
            <person name="Silva E."/>
            <person name="Sirven C."/>
            <person name="Soanes D.M."/>
            <person name="Talbot N.J."/>
            <person name="Templeton M."/>
            <person name="Yandava C."/>
            <person name="Yarden O."/>
            <person name="Zeng Q."/>
            <person name="Rollins J.A."/>
            <person name="Lebrun M.-H."/>
            <person name="Dickman M."/>
        </authorList>
    </citation>
    <scope>NUCLEOTIDE SEQUENCE [LARGE SCALE GENOMIC DNA]</scope>
    <source>
        <strain>ATCC 18683 / 1980 / Ss-1</strain>
    </source>
</reference>
<dbReference type="EC" id="3.4.11.18" evidence="1"/>
<dbReference type="EMBL" id="CH476636">
    <property type="protein sequence ID" value="EDN94778.1"/>
    <property type="molecule type" value="Genomic_DNA"/>
</dbReference>
<dbReference type="RefSeq" id="XP_001588206.1">
    <property type="nucleotide sequence ID" value="XM_001588156.1"/>
</dbReference>
<dbReference type="SMR" id="A7EZ86"/>
<dbReference type="FunCoup" id="A7EZ86">
    <property type="interactions" value="1122"/>
</dbReference>
<dbReference type="STRING" id="665079.A7EZ86"/>
<dbReference type="GeneID" id="5484447"/>
<dbReference type="KEGG" id="ssl:SS1G_10653"/>
<dbReference type="VEuPathDB" id="FungiDB:sscle_09g070940"/>
<dbReference type="InParanoid" id="A7EZ86"/>
<dbReference type="OMA" id="PFAKRWL"/>
<dbReference type="OrthoDB" id="7848262at2759"/>
<dbReference type="Proteomes" id="UP000001312">
    <property type="component" value="Unassembled WGS sequence"/>
</dbReference>
<dbReference type="GO" id="GO:0005737">
    <property type="term" value="C:cytoplasm"/>
    <property type="evidence" value="ECO:0000318"/>
    <property type="project" value="GO_Central"/>
</dbReference>
<dbReference type="GO" id="GO:0004177">
    <property type="term" value="F:aminopeptidase activity"/>
    <property type="evidence" value="ECO:0000318"/>
    <property type="project" value="GO_Central"/>
</dbReference>
<dbReference type="GO" id="GO:0004239">
    <property type="term" value="F:initiator methionyl aminopeptidase activity"/>
    <property type="evidence" value="ECO:0007669"/>
    <property type="project" value="UniProtKB-UniRule"/>
</dbReference>
<dbReference type="GO" id="GO:0046872">
    <property type="term" value="F:metal ion binding"/>
    <property type="evidence" value="ECO:0007669"/>
    <property type="project" value="UniProtKB-UniRule"/>
</dbReference>
<dbReference type="GO" id="GO:0070006">
    <property type="term" value="F:metalloaminopeptidase activity"/>
    <property type="evidence" value="ECO:0007669"/>
    <property type="project" value="UniProtKB-UniRule"/>
</dbReference>
<dbReference type="GO" id="GO:0008235">
    <property type="term" value="F:metalloexopeptidase activity"/>
    <property type="evidence" value="ECO:0000318"/>
    <property type="project" value="GO_Central"/>
</dbReference>
<dbReference type="GO" id="GO:0006508">
    <property type="term" value="P:proteolysis"/>
    <property type="evidence" value="ECO:0007669"/>
    <property type="project" value="UniProtKB-KW"/>
</dbReference>
<dbReference type="CDD" id="cd01088">
    <property type="entry name" value="MetAP2"/>
    <property type="match status" value="1"/>
</dbReference>
<dbReference type="Gene3D" id="3.90.230.10">
    <property type="entry name" value="Creatinase/methionine aminopeptidase superfamily"/>
    <property type="match status" value="1"/>
</dbReference>
<dbReference type="Gene3D" id="1.10.10.10">
    <property type="entry name" value="Winged helix-like DNA-binding domain superfamily/Winged helix DNA-binding domain"/>
    <property type="match status" value="1"/>
</dbReference>
<dbReference type="HAMAP" id="MF_03175">
    <property type="entry name" value="MetAP_2_euk"/>
    <property type="match status" value="1"/>
</dbReference>
<dbReference type="InterPro" id="IPR036005">
    <property type="entry name" value="Creatinase/aminopeptidase-like"/>
</dbReference>
<dbReference type="InterPro" id="IPR050247">
    <property type="entry name" value="Met_Aminopeptidase_Type2"/>
</dbReference>
<dbReference type="InterPro" id="IPR000994">
    <property type="entry name" value="Pept_M24"/>
</dbReference>
<dbReference type="InterPro" id="IPR001714">
    <property type="entry name" value="Pept_M24_MAP"/>
</dbReference>
<dbReference type="InterPro" id="IPR002468">
    <property type="entry name" value="Pept_M24A_MAP2"/>
</dbReference>
<dbReference type="InterPro" id="IPR036388">
    <property type="entry name" value="WH-like_DNA-bd_sf"/>
</dbReference>
<dbReference type="InterPro" id="IPR036390">
    <property type="entry name" value="WH_DNA-bd_sf"/>
</dbReference>
<dbReference type="NCBIfam" id="TIGR00501">
    <property type="entry name" value="met_pdase_II"/>
    <property type="match status" value="1"/>
</dbReference>
<dbReference type="PANTHER" id="PTHR45777">
    <property type="entry name" value="METHIONINE AMINOPEPTIDASE 2"/>
    <property type="match status" value="1"/>
</dbReference>
<dbReference type="PANTHER" id="PTHR45777:SF2">
    <property type="entry name" value="METHIONINE AMINOPEPTIDASE 2"/>
    <property type="match status" value="1"/>
</dbReference>
<dbReference type="Pfam" id="PF00557">
    <property type="entry name" value="Peptidase_M24"/>
    <property type="match status" value="1"/>
</dbReference>
<dbReference type="PRINTS" id="PR00599">
    <property type="entry name" value="MAPEPTIDASE"/>
</dbReference>
<dbReference type="SUPFAM" id="SSF55920">
    <property type="entry name" value="Creatinase/aminopeptidase"/>
    <property type="match status" value="1"/>
</dbReference>
<dbReference type="SUPFAM" id="SSF46785">
    <property type="entry name" value="Winged helix' DNA-binding domain"/>
    <property type="match status" value="1"/>
</dbReference>